<sequence length="228" mass="26620">MATWNNLNLQNGASPLMEQIIFFHDHTLIILIMITILVGYLMINLFFNKYINRFLLEGQMIELIWTILPAITLIFIALPSLRLLYLLDELNNPLITLKSIGHQWYWSYEYSDFNNIQFDSYMIPSKEMKFNEFRLLDVDNRIILPMNNQIRIMVTATDVIHSWTVPSLGVKIDANPGRLNQTNFFINRPGLFYGQCSEICGANHSFMPIVIESISINNFIKWINNYSS</sequence>
<protein>
    <recommendedName>
        <fullName>Cytochrome c oxidase subunit 2</fullName>
        <ecNumber>7.1.1.9</ecNumber>
    </recommendedName>
    <alternativeName>
        <fullName>Cytochrome c oxidase polypeptide II</fullName>
    </alternativeName>
</protein>
<geneLocation type="mitochondrion"/>
<accession>P98048</accession>
<organism>
    <name type="scientific">Yponomeuta malinellus</name>
    <name type="common">European small ermine moth</name>
    <name type="synonym">Apple ermine moth</name>
    <dbReference type="NCBI Taxonomy" id="33466"/>
    <lineage>
        <taxon>Eukaryota</taxon>
        <taxon>Metazoa</taxon>
        <taxon>Ecdysozoa</taxon>
        <taxon>Arthropoda</taxon>
        <taxon>Hexapoda</taxon>
        <taxon>Insecta</taxon>
        <taxon>Pterygota</taxon>
        <taxon>Neoptera</taxon>
        <taxon>Endopterygota</taxon>
        <taxon>Lepidoptera</taxon>
        <taxon>Glossata</taxon>
        <taxon>Ditrysia</taxon>
        <taxon>Yponomeutoidea</taxon>
        <taxon>Yponomeutidae</taxon>
        <taxon>Yponomeutinae</taxon>
        <taxon>Yponomeuta</taxon>
    </lineage>
</organism>
<feature type="chain" id="PRO_0000183716" description="Cytochrome c oxidase subunit 2">
    <location>
        <begin position="1"/>
        <end position="228"/>
    </location>
</feature>
<feature type="topological domain" description="Mitochondrial intermembrane" evidence="2">
    <location>
        <begin position="1"/>
        <end position="26"/>
    </location>
</feature>
<feature type="transmembrane region" description="Helical" evidence="2">
    <location>
        <begin position="27"/>
        <end position="48"/>
    </location>
</feature>
<feature type="topological domain" description="Mitochondrial matrix" evidence="2">
    <location>
        <begin position="49"/>
        <end position="62"/>
    </location>
</feature>
<feature type="transmembrane region" description="Helical" evidence="2">
    <location>
        <begin position="63"/>
        <end position="82"/>
    </location>
</feature>
<feature type="topological domain" description="Mitochondrial intermembrane" evidence="2">
    <location>
        <begin position="83"/>
        <end position="228"/>
    </location>
</feature>
<feature type="binding site" evidence="1">
    <location>
        <position position="161"/>
    </location>
    <ligand>
        <name>Cu cation</name>
        <dbReference type="ChEBI" id="CHEBI:23378"/>
        <label>A1</label>
    </ligand>
</feature>
<feature type="binding site" evidence="1">
    <location>
        <position position="196"/>
    </location>
    <ligand>
        <name>Cu cation</name>
        <dbReference type="ChEBI" id="CHEBI:23378"/>
        <label>A1</label>
    </ligand>
</feature>
<feature type="binding site" evidence="1">
    <location>
        <position position="196"/>
    </location>
    <ligand>
        <name>Cu cation</name>
        <dbReference type="ChEBI" id="CHEBI:23378"/>
        <label>A2</label>
    </ligand>
</feature>
<feature type="binding site" evidence="1">
    <location>
        <position position="198"/>
    </location>
    <ligand>
        <name>Cu cation</name>
        <dbReference type="ChEBI" id="CHEBI:23378"/>
        <label>A2</label>
    </ligand>
</feature>
<feature type="binding site" evidence="1">
    <location>
        <position position="198"/>
    </location>
    <ligand>
        <name>Mg(2+)</name>
        <dbReference type="ChEBI" id="CHEBI:18420"/>
        <note>ligand shared with subunit 1</note>
    </ligand>
</feature>
<feature type="binding site" evidence="1">
    <location>
        <position position="200"/>
    </location>
    <ligand>
        <name>Cu cation</name>
        <dbReference type="ChEBI" id="CHEBI:23378"/>
        <label>A1</label>
    </ligand>
</feature>
<feature type="binding site" evidence="1">
    <location>
        <position position="200"/>
    </location>
    <ligand>
        <name>Cu cation</name>
        <dbReference type="ChEBI" id="CHEBI:23378"/>
        <label>A2</label>
    </ligand>
</feature>
<feature type="binding site" evidence="1">
    <location>
        <position position="204"/>
    </location>
    <ligand>
        <name>Cu cation</name>
        <dbReference type="ChEBI" id="CHEBI:23378"/>
        <label>A2</label>
    </ligand>
</feature>
<feature type="binding site" evidence="1">
    <location>
        <position position="207"/>
    </location>
    <ligand>
        <name>Cu cation</name>
        <dbReference type="ChEBI" id="CHEBI:23378"/>
        <label>A1</label>
    </ligand>
</feature>
<comment type="function">
    <text evidence="1">Component of the cytochrome c oxidase, the last enzyme in the mitochondrial electron transport chain which drives oxidative phosphorylation. The respiratory chain contains 3 multisubunit complexes succinate dehydrogenase (complex II, CII), ubiquinol-cytochrome c oxidoreductase (cytochrome b-c1 complex, complex III, CIII) and cytochrome c oxidase (complex IV, CIV), that cooperate to transfer electrons derived from NADH and succinate to molecular oxygen, creating an electrochemical gradient over the inner membrane that drives transmembrane transport and the ATP synthase. Cytochrome c oxidase is the component of the respiratory chain that catalyzes the reduction of oxygen to water. Electrons originating from reduced cytochrome c in the intermembrane space (IMS) are transferred via the dinuclear copper A center (CU(A)) of subunit 2 and heme A of subunit 1 to the active site in subunit 1, a binuclear center (BNC) formed by heme A3 and copper B (CU(B)). The BNC reduces molecular oxygen to 2 water molecules using 4 electrons from cytochrome c in the IMS and 4 protons from the mitochondrial matrix.</text>
</comment>
<comment type="catalytic activity">
    <reaction evidence="1">
        <text>4 Fe(II)-[cytochrome c] + O2 + 8 H(+)(in) = 4 Fe(III)-[cytochrome c] + 2 H2O + 4 H(+)(out)</text>
        <dbReference type="Rhea" id="RHEA:11436"/>
        <dbReference type="Rhea" id="RHEA-COMP:10350"/>
        <dbReference type="Rhea" id="RHEA-COMP:14399"/>
        <dbReference type="ChEBI" id="CHEBI:15377"/>
        <dbReference type="ChEBI" id="CHEBI:15378"/>
        <dbReference type="ChEBI" id="CHEBI:15379"/>
        <dbReference type="ChEBI" id="CHEBI:29033"/>
        <dbReference type="ChEBI" id="CHEBI:29034"/>
        <dbReference type="EC" id="7.1.1.9"/>
    </reaction>
    <physiologicalReaction direction="left-to-right" evidence="1">
        <dbReference type="Rhea" id="RHEA:11437"/>
    </physiologicalReaction>
</comment>
<comment type="cofactor">
    <cofactor evidence="1">
        <name>Cu cation</name>
        <dbReference type="ChEBI" id="CHEBI:23378"/>
    </cofactor>
    <text evidence="1">Binds a dinuclear copper A center per subunit.</text>
</comment>
<comment type="subunit">
    <text evidence="1">Component of the cytochrome c oxidase (complex IV, CIV), a multisubunit enzyme composed of a catalytic core of 3 subunits and several supernumerary subunits. The complex exists as a monomer or a dimer and forms supercomplexes (SCs) in the inner mitochondrial membrane with ubiquinol-cytochrome c oxidoreductase (cytochrome b-c1 complex, complex III, CIII).</text>
</comment>
<comment type="subcellular location">
    <subcellularLocation>
        <location evidence="1">Mitochondrion inner membrane</location>
        <topology evidence="1">Multi-pass membrane protein</topology>
    </subcellularLocation>
</comment>
<comment type="similarity">
    <text evidence="3">Belongs to the cytochrome c oxidase subunit 2 family.</text>
</comment>
<name>COX2_YPOMA</name>
<proteinExistence type="inferred from homology"/>
<keyword id="KW-0186">Copper</keyword>
<keyword id="KW-0249">Electron transport</keyword>
<keyword id="KW-0460">Magnesium</keyword>
<keyword id="KW-0472">Membrane</keyword>
<keyword id="KW-0479">Metal-binding</keyword>
<keyword id="KW-0496">Mitochondrion</keyword>
<keyword id="KW-0999">Mitochondrion inner membrane</keyword>
<keyword id="KW-0679">Respiratory chain</keyword>
<keyword id="KW-1278">Translocase</keyword>
<keyword id="KW-0812">Transmembrane</keyword>
<keyword id="KW-1133">Transmembrane helix</keyword>
<keyword id="KW-0813">Transport</keyword>
<gene>
    <name type="primary">COII</name>
</gene>
<reference key="1">
    <citation type="journal article" date="1995" name="Ann. Entomol. Soc. Am.">
        <title>DNA-based identification of introduced ermine moth species in North America (Lepidoptera: Yponomeutidae).</title>
        <authorList>
            <person name="Sperling F.A.H."/>
            <person name="Landry J."/>
            <person name="Hickey D.A."/>
        </authorList>
        <dbReference type="AGRICOLA" id="IND20467367"/>
    </citation>
    <scope>NUCLEOTIDE SEQUENCE [GENOMIC DNA]</scope>
    <source>
        <tissue>Thorax</tissue>
    </source>
</reference>
<evidence type="ECO:0000250" key="1">
    <source>
        <dbReference type="UniProtKB" id="P00410"/>
    </source>
</evidence>
<evidence type="ECO:0000255" key="2"/>
<evidence type="ECO:0000305" key="3"/>
<dbReference type="EC" id="7.1.1.9"/>
<dbReference type="EMBL" id="U09206">
    <property type="protein sequence ID" value="AAB05557.1"/>
    <property type="molecule type" value="Genomic_DNA"/>
</dbReference>
<dbReference type="SMR" id="P98048"/>
<dbReference type="GO" id="GO:0005743">
    <property type="term" value="C:mitochondrial inner membrane"/>
    <property type="evidence" value="ECO:0007669"/>
    <property type="project" value="UniProtKB-SubCell"/>
</dbReference>
<dbReference type="GO" id="GO:0005507">
    <property type="term" value="F:copper ion binding"/>
    <property type="evidence" value="ECO:0007669"/>
    <property type="project" value="InterPro"/>
</dbReference>
<dbReference type="GO" id="GO:0004129">
    <property type="term" value="F:cytochrome-c oxidase activity"/>
    <property type="evidence" value="ECO:0007669"/>
    <property type="project" value="UniProtKB-EC"/>
</dbReference>
<dbReference type="GO" id="GO:0042773">
    <property type="term" value="P:ATP synthesis coupled electron transport"/>
    <property type="evidence" value="ECO:0007669"/>
    <property type="project" value="TreeGrafter"/>
</dbReference>
<dbReference type="CDD" id="cd13912">
    <property type="entry name" value="CcO_II_C"/>
    <property type="match status" value="1"/>
</dbReference>
<dbReference type="FunFam" id="1.10.287.90:FF:000006">
    <property type="entry name" value="Cytochrome c oxidase subunit 2"/>
    <property type="match status" value="1"/>
</dbReference>
<dbReference type="FunFam" id="2.60.40.420:FF:000001">
    <property type="entry name" value="Cytochrome c oxidase subunit 2"/>
    <property type="match status" value="1"/>
</dbReference>
<dbReference type="Gene3D" id="1.10.287.90">
    <property type="match status" value="1"/>
</dbReference>
<dbReference type="Gene3D" id="2.60.40.420">
    <property type="entry name" value="Cupredoxins - blue copper proteins"/>
    <property type="match status" value="1"/>
</dbReference>
<dbReference type="InterPro" id="IPR045187">
    <property type="entry name" value="CcO_II"/>
</dbReference>
<dbReference type="InterPro" id="IPR002429">
    <property type="entry name" value="CcO_II-like_C"/>
</dbReference>
<dbReference type="InterPro" id="IPR034210">
    <property type="entry name" value="CcO_II_C"/>
</dbReference>
<dbReference type="InterPro" id="IPR001505">
    <property type="entry name" value="Copper_CuA"/>
</dbReference>
<dbReference type="InterPro" id="IPR008972">
    <property type="entry name" value="Cupredoxin"/>
</dbReference>
<dbReference type="InterPro" id="IPR014222">
    <property type="entry name" value="Cyt_c_oxidase_su2"/>
</dbReference>
<dbReference type="InterPro" id="IPR011759">
    <property type="entry name" value="Cyt_c_oxidase_su2_TM_dom"/>
</dbReference>
<dbReference type="InterPro" id="IPR036257">
    <property type="entry name" value="Cyt_c_oxidase_su2_TM_sf"/>
</dbReference>
<dbReference type="NCBIfam" id="TIGR02866">
    <property type="entry name" value="CoxB"/>
    <property type="match status" value="1"/>
</dbReference>
<dbReference type="PANTHER" id="PTHR22888:SF9">
    <property type="entry name" value="CYTOCHROME C OXIDASE SUBUNIT 2"/>
    <property type="match status" value="1"/>
</dbReference>
<dbReference type="PANTHER" id="PTHR22888">
    <property type="entry name" value="CYTOCHROME C OXIDASE, SUBUNIT II"/>
    <property type="match status" value="1"/>
</dbReference>
<dbReference type="Pfam" id="PF00116">
    <property type="entry name" value="COX2"/>
    <property type="match status" value="1"/>
</dbReference>
<dbReference type="Pfam" id="PF02790">
    <property type="entry name" value="COX2_TM"/>
    <property type="match status" value="1"/>
</dbReference>
<dbReference type="PRINTS" id="PR01166">
    <property type="entry name" value="CYCOXIDASEII"/>
</dbReference>
<dbReference type="SUPFAM" id="SSF49503">
    <property type="entry name" value="Cupredoxins"/>
    <property type="match status" value="1"/>
</dbReference>
<dbReference type="SUPFAM" id="SSF81464">
    <property type="entry name" value="Cytochrome c oxidase subunit II-like, transmembrane region"/>
    <property type="match status" value="1"/>
</dbReference>
<dbReference type="PROSITE" id="PS00078">
    <property type="entry name" value="COX2"/>
    <property type="match status" value="1"/>
</dbReference>
<dbReference type="PROSITE" id="PS50857">
    <property type="entry name" value="COX2_CUA"/>
    <property type="match status" value="1"/>
</dbReference>
<dbReference type="PROSITE" id="PS50999">
    <property type="entry name" value="COX2_TM"/>
    <property type="match status" value="1"/>
</dbReference>